<comment type="function">
    <text evidence="1">This is one of the proteins that bind and probably mediate the attachment of the 5S RNA into the large ribosomal subunit, where it forms part of the central protuberance. In the 70S ribosome it contacts protein S13 of the 30S subunit (bridge B1b), connecting the 2 subunits; this bridge is implicated in subunit movement. Contacts the P site tRNA; the 5S rRNA and some of its associated proteins might help stabilize positioning of ribosome-bound tRNAs.</text>
</comment>
<comment type="subunit">
    <text evidence="1">Part of the 50S ribosomal subunit; part of the 5S rRNA/L5/L18/L25 subcomplex. Contacts the 5S rRNA and the P site tRNA. Forms a bridge to the 30S subunit in the 70S ribosome.</text>
</comment>
<comment type="similarity">
    <text evidence="1">Belongs to the universal ribosomal protein uL5 family.</text>
</comment>
<proteinExistence type="inferred from homology"/>
<keyword id="KW-0687">Ribonucleoprotein</keyword>
<keyword id="KW-0689">Ribosomal protein</keyword>
<keyword id="KW-0694">RNA-binding</keyword>
<keyword id="KW-0699">rRNA-binding</keyword>
<keyword id="KW-0820">tRNA-binding</keyword>
<sequence>MAKLHDKYQETVVAELAKKFGYTSVMQVPRIEKITLNMGVGEAVADKKIMDHAVRDMTAIAGQKPVVTVARKSVAGFKIREGYPIGCKVTLRGERMWEFLERLVDIAIPRIRDFRGLSAKAFDGRGNYAMGVREQIIFPEIDYDKIDKIRGMDIVITTTAKNDEEGRALLDAFNFPFKK</sequence>
<gene>
    <name evidence="1" type="primary">rplE</name>
    <name type="ordered locus">Sbal195_0212</name>
</gene>
<name>RL5_SHEB9</name>
<accession>A9KWB4</accession>
<organism>
    <name type="scientific">Shewanella baltica (strain OS195)</name>
    <dbReference type="NCBI Taxonomy" id="399599"/>
    <lineage>
        <taxon>Bacteria</taxon>
        <taxon>Pseudomonadati</taxon>
        <taxon>Pseudomonadota</taxon>
        <taxon>Gammaproteobacteria</taxon>
        <taxon>Alteromonadales</taxon>
        <taxon>Shewanellaceae</taxon>
        <taxon>Shewanella</taxon>
    </lineage>
</organism>
<protein>
    <recommendedName>
        <fullName evidence="1">Large ribosomal subunit protein uL5</fullName>
    </recommendedName>
    <alternativeName>
        <fullName evidence="2">50S ribosomal protein L5</fullName>
    </alternativeName>
</protein>
<reference key="1">
    <citation type="submission" date="2007-11" db="EMBL/GenBank/DDBJ databases">
        <title>Complete sequence of chromosome of Shewanella baltica OS195.</title>
        <authorList>
            <consortium name="US DOE Joint Genome Institute"/>
            <person name="Copeland A."/>
            <person name="Lucas S."/>
            <person name="Lapidus A."/>
            <person name="Barry K."/>
            <person name="Glavina del Rio T."/>
            <person name="Dalin E."/>
            <person name="Tice H."/>
            <person name="Pitluck S."/>
            <person name="Chain P."/>
            <person name="Malfatti S."/>
            <person name="Shin M."/>
            <person name="Vergez L."/>
            <person name="Schmutz J."/>
            <person name="Larimer F."/>
            <person name="Land M."/>
            <person name="Hauser L."/>
            <person name="Kyrpides N."/>
            <person name="Kim E."/>
            <person name="Brettar I."/>
            <person name="Rodrigues J."/>
            <person name="Konstantinidis K."/>
            <person name="Klappenbach J."/>
            <person name="Hofle M."/>
            <person name="Tiedje J."/>
            <person name="Richardson P."/>
        </authorList>
    </citation>
    <scope>NUCLEOTIDE SEQUENCE [LARGE SCALE GENOMIC DNA]</scope>
    <source>
        <strain>OS195</strain>
    </source>
</reference>
<feature type="chain" id="PRO_1000086607" description="Large ribosomal subunit protein uL5">
    <location>
        <begin position="1"/>
        <end position="179"/>
    </location>
</feature>
<dbReference type="EMBL" id="CP000891">
    <property type="protein sequence ID" value="ABX47394.1"/>
    <property type="molecule type" value="Genomic_DNA"/>
</dbReference>
<dbReference type="RefSeq" id="WP_006083588.1">
    <property type="nucleotide sequence ID" value="NC_009997.1"/>
</dbReference>
<dbReference type="SMR" id="A9KWB4"/>
<dbReference type="GeneID" id="11770569"/>
<dbReference type="KEGG" id="sbn:Sbal195_0212"/>
<dbReference type="HOGENOM" id="CLU_061015_2_1_6"/>
<dbReference type="Proteomes" id="UP000000770">
    <property type="component" value="Chromosome"/>
</dbReference>
<dbReference type="GO" id="GO:1990904">
    <property type="term" value="C:ribonucleoprotein complex"/>
    <property type="evidence" value="ECO:0007669"/>
    <property type="project" value="UniProtKB-KW"/>
</dbReference>
<dbReference type="GO" id="GO:0005840">
    <property type="term" value="C:ribosome"/>
    <property type="evidence" value="ECO:0007669"/>
    <property type="project" value="UniProtKB-KW"/>
</dbReference>
<dbReference type="GO" id="GO:0019843">
    <property type="term" value="F:rRNA binding"/>
    <property type="evidence" value="ECO:0007669"/>
    <property type="project" value="UniProtKB-UniRule"/>
</dbReference>
<dbReference type="GO" id="GO:0003735">
    <property type="term" value="F:structural constituent of ribosome"/>
    <property type="evidence" value="ECO:0007669"/>
    <property type="project" value="InterPro"/>
</dbReference>
<dbReference type="GO" id="GO:0000049">
    <property type="term" value="F:tRNA binding"/>
    <property type="evidence" value="ECO:0007669"/>
    <property type="project" value="UniProtKB-UniRule"/>
</dbReference>
<dbReference type="GO" id="GO:0006412">
    <property type="term" value="P:translation"/>
    <property type="evidence" value="ECO:0007669"/>
    <property type="project" value="UniProtKB-UniRule"/>
</dbReference>
<dbReference type="FunFam" id="3.30.1440.10:FF:000001">
    <property type="entry name" value="50S ribosomal protein L5"/>
    <property type="match status" value="1"/>
</dbReference>
<dbReference type="Gene3D" id="3.30.1440.10">
    <property type="match status" value="1"/>
</dbReference>
<dbReference type="HAMAP" id="MF_01333_B">
    <property type="entry name" value="Ribosomal_uL5_B"/>
    <property type="match status" value="1"/>
</dbReference>
<dbReference type="InterPro" id="IPR002132">
    <property type="entry name" value="Ribosomal_uL5"/>
</dbReference>
<dbReference type="InterPro" id="IPR020930">
    <property type="entry name" value="Ribosomal_uL5_bac-type"/>
</dbReference>
<dbReference type="InterPro" id="IPR031309">
    <property type="entry name" value="Ribosomal_uL5_C"/>
</dbReference>
<dbReference type="InterPro" id="IPR020929">
    <property type="entry name" value="Ribosomal_uL5_CS"/>
</dbReference>
<dbReference type="InterPro" id="IPR022803">
    <property type="entry name" value="Ribosomal_uL5_dom_sf"/>
</dbReference>
<dbReference type="InterPro" id="IPR031310">
    <property type="entry name" value="Ribosomal_uL5_N"/>
</dbReference>
<dbReference type="NCBIfam" id="NF000585">
    <property type="entry name" value="PRK00010.1"/>
    <property type="match status" value="1"/>
</dbReference>
<dbReference type="PANTHER" id="PTHR11994">
    <property type="entry name" value="60S RIBOSOMAL PROTEIN L11-RELATED"/>
    <property type="match status" value="1"/>
</dbReference>
<dbReference type="Pfam" id="PF00281">
    <property type="entry name" value="Ribosomal_L5"/>
    <property type="match status" value="1"/>
</dbReference>
<dbReference type="Pfam" id="PF00673">
    <property type="entry name" value="Ribosomal_L5_C"/>
    <property type="match status" value="1"/>
</dbReference>
<dbReference type="PIRSF" id="PIRSF002161">
    <property type="entry name" value="Ribosomal_L5"/>
    <property type="match status" value="1"/>
</dbReference>
<dbReference type="SUPFAM" id="SSF55282">
    <property type="entry name" value="RL5-like"/>
    <property type="match status" value="1"/>
</dbReference>
<dbReference type="PROSITE" id="PS00358">
    <property type="entry name" value="RIBOSOMAL_L5"/>
    <property type="match status" value="1"/>
</dbReference>
<evidence type="ECO:0000255" key="1">
    <source>
        <dbReference type="HAMAP-Rule" id="MF_01333"/>
    </source>
</evidence>
<evidence type="ECO:0000305" key="2"/>